<comment type="function">
    <text evidence="1">Binds to the 23S rRNA.</text>
</comment>
<comment type="cofactor">
    <cofactor evidence="1">
        <name>Zn(2+)</name>
        <dbReference type="ChEBI" id="CHEBI:29105"/>
    </cofactor>
    <text evidence="1">Binds 1 zinc ion per subunit.</text>
</comment>
<comment type="similarity">
    <text evidence="3">Belongs to the eukaryotic ribosomal protein eL37 family.</text>
</comment>
<reference key="1">
    <citation type="journal article" date="1999" name="DNA Res.">
        <title>Complete genome sequence of an aerobic hyper-thermophilic crenarchaeon, Aeropyrum pernix K1.</title>
        <authorList>
            <person name="Kawarabayasi Y."/>
            <person name="Hino Y."/>
            <person name="Horikawa H."/>
            <person name="Yamazaki S."/>
            <person name="Haikawa Y."/>
            <person name="Jin-no K."/>
            <person name="Takahashi M."/>
            <person name="Sekine M."/>
            <person name="Baba S."/>
            <person name="Ankai A."/>
            <person name="Kosugi H."/>
            <person name="Hosoyama A."/>
            <person name="Fukui S."/>
            <person name="Nagai Y."/>
            <person name="Nishijima K."/>
            <person name="Nakazawa H."/>
            <person name="Takamiya M."/>
            <person name="Masuda S."/>
            <person name="Funahashi T."/>
            <person name="Tanaka T."/>
            <person name="Kudoh Y."/>
            <person name="Yamazaki J."/>
            <person name="Kushida N."/>
            <person name="Oguchi A."/>
            <person name="Aoki K."/>
            <person name="Kubota K."/>
            <person name="Nakamura Y."/>
            <person name="Nomura N."/>
            <person name="Sako Y."/>
            <person name="Kikuchi H."/>
        </authorList>
    </citation>
    <scope>NUCLEOTIDE SEQUENCE [LARGE SCALE GENOMIC DNA]</scope>
    <source>
        <strain>ATCC 700893 / DSM 11879 / JCM 9820 / NBRC 100138 / K1</strain>
    </source>
</reference>
<organism>
    <name type="scientific">Aeropyrum pernix (strain ATCC 700893 / DSM 11879 / JCM 9820 / NBRC 100138 / K1)</name>
    <dbReference type="NCBI Taxonomy" id="272557"/>
    <lineage>
        <taxon>Archaea</taxon>
        <taxon>Thermoproteota</taxon>
        <taxon>Thermoprotei</taxon>
        <taxon>Desulfurococcales</taxon>
        <taxon>Desulfurococcaceae</taxon>
        <taxon>Aeropyrum</taxon>
    </lineage>
</organism>
<feature type="chain" id="PRO_0000139724" description="Large ribosomal subunit protein eL37">
    <location>
        <begin position="1"/>
        <end position="62"/>
    </location>
</feature>
<feature type="zinc finger region" description="C4-type" evidence="2">
    <location>
        <begin position="20"/>
        <end position="38"/>
    </location>
</feature>
<feature type="binding site" evidence="1">
    <location>
        <position position="20"/>
    </location>
    <ligand>
        <name>Zn(2+)</name>
        <dbReference type="ChEBI" id="CHEBI:29105"/>
    </ligand>
</feature>
<feature type="binding site" evidence="1">
    <location>
        <position position="23"/>
    </location>
    <ligand>
        <name>Zn(2+)</name>
        <dbReference type="ChEBI" id="CHEBI:29105"/>
    </ligand>
</feature>
<feature type="binding site" evidence="1">
    <location>
        <position position="35"/>
    </location>
    <ligand>
        <name>Zn(2+)</name>
        <dbReference type="ChEBI" id="CHEBI:29105"/>
    </ligand>
</feature>
<feature type="binding site" evidence="1">
    <location>
        <position position="38"/>
    </location>
    <ligand>
        <name>Zn(2+)</name>
        <dbReference type="ChEBI" id="CHEBI:29105"/>
    </ligand>
</feature>
<keyword id="KW-0479">Metal-binding</keyword>
<keyword id="KW-1185">Reference proteome</keyword>
<keyword id="KW-0687">Ribonucleoprotein</keyword>
<keyword id="KW-0689">Ribosomal protein</keyword>
<keyword id="KW-0694">RNA-binding</keyword>
<keyword id="KW-0699">rRNA-binding</keyword>
<keyword id="KW-0862">Zinc</keyword>
<keyword id="KW-0863">Zinc-finger</keyword>
<protein>
    <recommendedName>
        <fullName evidence="3">Large ribosomal subunit protein eL37</fullName>
    </recommendedName>
    <alternativeName>
        <fullName>50S ribosomal protein L37e</fullName>
    </alternativeName>
</protein>
<dbReference type="EMBL" id="BA000002">
    <property type="protein sequence ID" value="BAA79492.1"/>
    <property type="molecule type" value="Genomic_DNA"/>
</dbReference>
<dbReference type="PIR" id="H72749">
    <property type="entry name" value="H72749"/>
</dbReference>
<dbReference type="RefSeq" id="WP_010865812.1">
    <property type="nucleotide sequence ID" value="NC_000854.2"/>
</dbReference>
<dbReference type="SMR" id="Q9YEQ4"/>
<dbReference type="STRING" id="272557.APE_0525b"/>
<dbReference type="EnsemblBacteria" id="BAA79492">
    <property type="protein sequence ID" value="BAA79492"/>
    <property type="gene ID" value="APE_0525b"/>
</dbReference>
<dbReference type="KEGG" id="ape:APE_0525b"/>
<dbReference type="PATRIC" id="fig|272557.25.peg.396"/>
<dbReference type="eggNOG" id="arCOG04126">
    <property type="taxonomic scope" value="Archaea"/>
</dbReference>
<dbReference type="Proteomes" id="UP000002518">
    <property type="component" value="Chromosome"/>
</dbReference>
<dbReference type="GO" id="GO:0022625">
    <property type="term" value="C:cytosolic large ribosomal subunit"/>
    <property type="evidence" value="ECO:0007669"/>
    <property type="project" value="TreeGrafter"/>
</dbReference>
<dbReference type="GO" id="GO:0019843">
    <property type="term" value="F:rRNA binding"/>
    <property type="evidence" value="ECO:0007669"/>
    <property type="project" value="UniProtKB-KW"/>
</dbReference>
<dbReference type="GO" id="GO:0003735">
    <property type="term" value="F:structural constituent of ribosome"/>
    <property type="evidence" value="ECO:0007669"/>
    <property type="project" value="InterPro"/>
</dbReference>
<dbReference type="GO" id="GO:0008270">
    <property type="term" value="F:zinc ion binding"/>
    <property type="evidence" value="ECO:0007669"/>
    <property type="project" value="UniProtKB-UniRule"/>
</dbReference>
<dbReference type="GO" id="GO:0006412">
    <property type="term" value="P:translation"/>
    <property type="evidence" value="ECO:0007669"/>
    <property type="project" value="UniProtKB-UniRule"/>
</dbReference>
<dbReference type="FunFam" id="2.20.25.30:FF:000003">
    <property type="entry name" value="50S ribosomal protein L37e"/>
    <property type="match status" value="1"/>
</dbReference>
<dbReference type="Gene3D" id="2.20.25.30">
    <property type="match status" value="1"/>
</dbReference>
<dbReference type="HAMAP" id="MF_00547">
    <property type="entry name" value="Ribosomal_eL37"/>
    <property type="match status" value="1"/>
</dbReference>
<dbReference type="InterPro" id="IPR001569">
    <property type="entry name" value="Ribosomal_eL37"/>
</dbReference>
<dbReference type="InterPro" id="IPR011331">
    <property type="entry name" value="Ribosomal_eL37/eL43"/>
</dbReference>
<dbReference type="InterPro" id="IPR018267">
    <property type="entry name" value="Ribosomal_eL37_CS"/>
</dbReference>
<dbReference type="InterPro" id="IPR011332">
    <property type="entry name" value="Ribosomal_zn-bd"/>
</dbReference>
<dbReference type="NCBIfam" id="NF003214">
    <property type="entry name" value="PRK04179.1"/>
    <property type="match status" value="1"/>
</dbReference>
<dbReference type="PANTHER" id="PTHR10768">
    <property type="entry name" value="60S RIBOSOMAL PROTEIN L37"/>
    <property type="match status" value="1"/>
</dbReference>
<dbReference type="PANTHER" id="PTHR10768:SF0">
    <property type="entry name" value="RIBOSOMAL PROTEIN L37"/>
    <property type="match status" value="1"/>
</dbReference>
<dbReference type="Pfam" id="PF01907">
    <property type="entry name" value="Ribosomal_L37e"/>
    <property type="match status" value="1"/>
</dbReference>
<dbReference type="SUPFAM" id="SSF57829">
    <property type="entry name" value="Zn-binding ribosomal proteins"/>
    <property type="match status" value="1"/>
</dbReference>
<dbReference type="PROSITE" id="PS01077">
    <property type="entry name" value="RIBOSOMAL_L37E"/>
    <property type="match status" value="1"/>
</dbReference>
<proteinExistence type="inferred from homology"/>
<sequence>MGKGTPSMGKHGRSKTHIVCRRCGRRSYNVAKGYCAACGFGRSRRMRRYSWQNKKWNRVRVV</sequence>
<gene>
    <name type="primary">rpl37e</name>
    <name type="ordered locus">APE_0525b</name>
    <name type="ORF">APES023</name>
</gene>
<accession>Q9YEQ4</accession>
<evidence type="ECO:0000250" key="1"/>
<evidence type="ECO:0000255" key="2"/>
<evidence type="ECO:0000305" key="3"/>
<name>RL37_AERPE</name>